<accession>Q5WZJ7</accession>
<keyword id="KW-0687">Ribonucleoprotein</keyword>
<keyword id="KW-0689">Ribosomal protein</keyword>
<keyword id="KW-0694">RNA-binding</keyword>
<keyword id="KW-0699">rRNA-binding</keyword>
<name>RL6_LEGPL</name>
<feature type="chain" id="PRO_0000265262" description="Large ribosomal subunit protein uL6">
    <location>
        <begin position="1"/>
        <end position="179"/>
    </location>
</feature>
<sequence>MSRVAKAPVIHSANVEVTFVDGVITVKGPKGILTQKINKLVNIQHSKESNKLEFSPASNDPMGWAQAGTARALVRNMVQGVTEGYTVTLELVGVGYRAQSKDKSISLSLGYSHSIEYDLPKGVTVETPNNTTILLKGVDKQVLGQIASEIRAFRPPEPYKGKGVKYAGEQIVRKEAKKK</sequence>
<organism>
    <name type="scientific">Legionella pneumophila (strain Lens)</name>
    <dbReference type="NCBI Taxonomy" id="297245"/>
    <lineage>
        <taxon>Bacteria</taxon>
        <taxon>Pseudomonadati</taxon>
        <taxon>Pseudomonadota</taxon>
        <taxon>Gammaproteobacteria</taxon>
        <taxon>Legionellales</taxon>
        <taxon>Legionellaceae</taxon>
        <taxon>Legionella</taxon>
    </lineage>
</organism>
<gene>
    <name evidence="1" type="primary">rplF</name>
    <name type="ordered locus">lpl0384</name>
</gene>
<dbReference type="EMBL" id="CR628337">
    <property type="protein sequence ID" value="CAH14615.1"/>
    <property type="molecule type" value="Genomic_DNA"/>
</dbReference>
<dbReference type="RefSeq" id="WP_010946093.1">
    <property type="nucleotide sequence ID" value="NC_006369.1"/>
</dbReference>
<dbReference type="SMR" id="Q5WZJ7"/>
<dbReference type="GeneID" id="57034347"/>
<dbReference type="KEGG" id="lpf:lpl0384"/>
<dbReference type="LegioList" id="lpl0384"/>
<dbReference type="HOGENOM" id="CLU_065464_1_2_6"/>
<dbReference type="Proteomes" id="UP000002517">
    <property type="component" value="Chromosome"/>
</dbReference>
<dbReference type="GO" id="GO:0022625">
    <property type="term" value="C:cytosolic large ribosomal subunit"/>
    <property type="evidence" value="ECO:0007669"/>
    <property type="project" value="TreeGrafter"/>
</dbReference>
<dbReference type="GO" id="GO:0019843">
    <property type="term" value="F:rRNA binding"/>
    <property type="evidence" value="ECO:0007669"/>
    <property type="project" value="UniProtKB-UniRule"/>
</dbReference>
<dbReference type="GO" id="GO:0003735">
    <property type="term" value="F:structural constituent of ribosome"/>
    <property type="evidence" value="ECO:0007669"/>
    <property type="project" value="InterPro"/>
</dbReference>
<dbReference type="GO" id="GO:0002181">
    <property type="term" value="P:cytoplasmic translation"/>
    <property type="evidence" value="ECO:0007669"/>
    <property type="project" value="TreeGrafter"/>
</dbReference>
<dbReference type="FunFam" id="3.90.930.12:FF:000001">
    <property type="entry name" value="50S ribosomal protein L6"/>
    <property type="match status" value="1"/>
</dbReference>
<dbReference type="Gene3D" id="3.90.930.12">
    <property type="entry name" value="Ribosomal protein L6, alpha-beta domain"/>
    <property type="match status" value="2"/>
</dbReference>
<dbReference type="HAMAP" id="MF_01365_B">
    <property type="entry name" value="Ribosomal_uL6_B"/>
    <property type="match status" value="1"/>
</dbReference>
<dbReference type="InterPro" id="IPR000702">
    <property type="entry name" value="Ribosomal_uL6-like"/>
</dbReference>
<dbReference type="InterPro" id="IPR036789">
    <property type="entry name" value="Ribosomal_uL6-like_a/b-dom_sf"/>
</dbReference>
<dbReference type="InterPro" id="IPR020040">
    <property type="entry name" value="Ribosomal_uL6_a/b-dom"/>
</dbReference>
<dbReference type="InterPro" id="IPR019906">
    <property type="entry name" value="Ribosomal_uL6_bac-type"/>
</dbReference>
<dbReference type="InterPro" id="IPR002358">
    <property type="entry name" value="Ribosomal_uL6_CS"/>
</dbReference>
<dbReference type="NCBIfam" id="TIGR03654">
    <property type="entry name" value="L6_bact"/>
    <property type="match status" value="1"/>
</dbReference>
<dbReference type="PANTHER" id="PTHR11655">
    <property type="entry name" value="60S/50S RIBOSOMAL PROTEIN L6/L9"/>
    <property type="match status" value="1"/>
</dbReference>
<dbReference type="PANTHER" id="PTHR11655:SF14">
    <property type="entry name" value="LARGE RIBOSOMAL SUBUNIT PROTEIN UL6M"/>
    <property type="match status" value="1"/>
</dbReference>
<dbReference type="Pfam" id="PF00347">
    <property type="entry name" value="Ribosomal_L6"/>
    <property type="match status" value="2"/>
</dbReference>
<dbReference type="PIRSF" id="PIRSF002162">
    <property type="entry name" value="Ribosomal_L6"/>
    <property type="match status" value="1"/>
</dbReference>
<dbReference type="PRINTS" id="PR00059">
    <property type="entry name" value="RIBOSOMALL6"/>
</dbReference>
<dbReference type="SUPFAM" id="SSF56053">
    <property type="entry name" value="Ribosomal protein L6"/>
    <property type="match status" value="2"/>
</dbReference>
<dbReference type="PROSITE" id="PS00525">
    <property type="entry name" value="RIBOSOMAL_L6_1"/>
    <property type="match status" value="1"/>
</dbReference>
<evidence type="ECO:0000255" key="1">
    <source>
        <dbReference type="HAMAP-Rule" id="MF_01365"/>
    </source>
</evidence>
<evidence type="ECO:0000305" key="2"/>
<proteinExistence type="inferred from homology"/>
<reference key="1">
    <citation type="journal article" date="2004" name="Nat. Genet.">
        <title>Evidence in the Legionella pneumophila genome for exploitation of host cell functions and high genome plasticity.</title>
        <authorList>
            <person name="Cazalet C."/>
            <person name="Rusniok C."/>
            <person name="Brueggemann H."/>
            <person name="Zidane N."/>
            <person name="Magnier A."/>
            <person name="Ma L."/>
            <person name="Tichit M."/>
            <person name="Jarraud S."/>
            <person name="Bouchier C."/>
            <person name="Vandenesch F."/>
            <person name="Kunst F."/>
            <person name="Etienne J."/>
            <person name="Glaser P."/>
            <person name="Buchrieser C."/>
        </authorList>
    </citation>
    <scope>NUCLEOTIDE SEQUENCE [LARGE SCALE GENOMIC DNA]</scope>
    <source>
        <strain>Lens</strain>
    </source>
</reference>
<protein>
    <recommendedName>
        <fullName evidence="1">Large ribosomal subunit protein uL6</fullName>
    </recommendedName>
    <alternativeName>
        <fullName evidence="2">50S ribosomal protein L6</fullName>
    </alternativeName>
</protein>
<comment type="function">
    <text evidence="1">This protein binds to the 23S rRNA, and is important in its secondary structure. It is located near the subunit interface in the base of the L7/L12 stalk, and near the tRNA binding site of the peptidyltransferase center.</text>
</comment>
<comment type="subunit">
    <text evidence="1">Part of the 50S ribosomal subunit.</text>
</comment>
<comment type="similarity">
    <text evidence="1">Belongs to the universal ribosomal protein uL6 family.</text>
</comment>